<comment type="function">
    <text evidence="1 4">Akt2-a is one of several closely related serine/threonine-protein kinases known as the AKT kinase, and which regulate many processes including metabolism, proliferation, cell survival, growth and angiogenesis. This is mediated through serine and/or threonine phosphorylation of a range of downstream substrates. Over 100 substrate candidates have been reported so far, but for most of them, no isoform specificity has been reported (By similarity). May be involved in the inhibition of ciliogenesis (By similarity).</text>
</comment>
<comment type="catalytic activity">
    <reaction evidence="5">
        <text>L-seryl-[protein] + ATP = O-phospho-L-seryl-[protein] + ADP + H(+)</text>
        <dbReference type="Rhea" id="RHEA:17989"/>
        <dbReference type="Rhea" id="RHEA-COMP:9863"/>
        <dbReference type="Rhea" id="RHEA-COMP:11604"/>
        <dbReference type="ChEBI" id="CHEBI:15378"/>
        <dbReference type="ChEBI" id="CHEBI:29999"/>
        <dbReference type="ChEBI" id="CHEBI:30616"/>
        <dbReference type="ChEBI" id="CHEBI:83421"/>
        <dbReference type="ChEBI" id="CHEBI:456216"/>
        <dbReference type="EC" id="2.7.11.1"/>
    </reaction>
</comment>
<comment type="catalytic activity">
    <reaction evidence="5">
        <text>L-threonyl-[protein] + ATP = O-phospho-L-threonyl-[protein] + ADP + H(+)</text>
        <dbReference type="Rhea" id="RHEA:46608"/>
        <dbReference type="Rhea" id="RHEA-COMP:11060"/>
        <dbReference type="Rhea" id="RHEA-COMP:11605"/>
        <dbReference type="ChEBI" id="CHEBI:15378"/>
        <dbReference type="ChEBI" id="CHEBI:30013"/>
        <dbReference type="ChEBI" id="CHEBI:30616"/>
        <dbReference type="ChEBI" id="CHEBI:61977"/>
        <dbReference type="ChEBI" id="CHEBI:456216"/>
        <dbReference type="EC" id="2.7.11.1"/>
    </reaction>
</comment>
<comment type="activity regulation">
    <text evidence="1">Two specific sites, one in the kinase domain (Thr-314) and the other in the C-terminal regulatory region (Ser-479), need to be phosphorylated for its full activation.</text>
</comment>
<comment type="PTM">
    <text evidence="2 3">Phosphorylation on Thr-314 and Ser-479 is required for full activity (By similarity). Phosphorylation of the activation loop at Thr-314 by PDPK1/PDK1 is a prerequisite for full activation (By similarity). Phosphorylation by mTORC2 at Ser-479 in response to growth factors plays a key role in AKT1 activation by facilitating subsequent phosphorylation of the activation loop by PDPK1/PDK1 (By similarity).</text>
</comment>
<comment type="similarity">
    <text evidence="11">Belongs to the protein kinase superfamily. AGC Ser/Thr protein kinase family. RAC subfamily.</text>
</comment>
<evidence type="ECO:0000250" key="1"/>
<evidence type="ECO:0000250" key="2">
    <source>
        <dbReference type="UniProtKB" id="P31749"/>
    </source>
</evidence>
<evidence type="ECO:0000250" key="3">
    <source>
        <dbReference type="UniProtKB" id="P31750"/>
    </source>
</evidence>
<evidence type="ECO:0000250" key="4">
    <source>
        <dbReference type="UniProtKB" id="P31751"/>
    </source>
</evidence>
<evidence type="ECO:0000250" key="5">
    <source>
        <dbReference type="UniProtKB" id="Q60823"/>
    </source>
</evidence>
<evidence type="ECO:0000255" key="6">
    <source>
        <dbReference type="PROSITE-ProRule" id="PRU00145"/>
    </source>
</evidence>
<evidence type="ECO:0000255" key="7">
    <source>
        <dbReference type="PROSITE-ProRule" id="PRU00159"/>
    </source>
</evidence>
<evidence type="ECO:0000255" key="8">
    <source>
        <dbReference type="PROSITE-ProRule" id="PRU00618"/>
    </source>
</evidence>
<evidence type="ECO:0000255" key="9">
    <source>
        <dbReference type="PROSITE-ProRule" id="PRU10027"/>
    </source>
</evidence>
<evidence type="ECO:0000256" key="10">
    <source>
        <dbReference type="SAM" id="MobiDB-lite"/>
    </source>
</evidence>
<evidence type="ECO:0000305" key="11"/>
<evidence type="ECO:0000312" key="12">
    <source>
        <dbReference type="EMBL" id="AAH46261.1"/>
    </source>
</evidence>
<gene>
    <name type="primary">akt2-a</name>
</gene>
<name>AKT2A_XENLA</name>
<keyword id="KW-0067">ATP-binding</keyword>
<keyword id="KW-0325">Glycoprotein</keyword>
<keyword id="KW-0418">Kinase</keyword>
<keyword id="KW-0547">Nucleotide-binding</keyword>
<keyword id="KW-0597">Phosphoprotein</keyword>
<keyword id="KW-1185">Reference proteome</keyword>
<keyword id="KW-0723">Serine/threonine-protein kinase</keyword>
<keyword id="KW-0808">Transferase</keyword>
<accession>Q7ZX15</accession>
<protein>
    <recommendedName>
        <fullName>RAC-beta serine/threonine-protein kinase A</fullName>
        <ecNumber>2.7.11.1</ecNumber>
    </recommendedName>
    <alternativeName>
        <fullName>Protein kinase Akt-2-A</fullName>
    </alternativeName>
    <alternativeName>
        <fullName>Protein kinase B, beta-A</fullName>
        <shortName>PKB beta-A</shortName>
    </alternativeName>
    <alternativeName>
        <fullName>RAC-PK-beta-A</fullName>
    </alternativeName>
</protein>
<feature type="chain" id="PRO_0000223508" description="RAC-beta serine/threonine-protein kinase A">
    <location>
        <begin position="1"/>
        <end position="486"/>
    </location>
</feature>
<feature type="domain" description="PH" evidence="6">
    <location>
        <begin position="5"/>
        <end position="110"/>
    </location>
</feature>
<feature type="domain" description="Protein kinase" evidence="7">
    <location>
        <begin position="157"/>
        <end position="414"/>
    </location>
</feature>
<feature type="domain" description="AGC-kinase C-terminal" evidence="8">
    <location>
        <begin position="415"/>
        <end position="486"/>
    </location>
</feature>
<feature type="region of interest" description="Disordered" evidence="10">
    <location>
        <begin position="455"/>
        <end position="486"/>
    </location>
</feature>
<feature type="compositionally biased region" description="Basic and acidic residues" evidence="10">
    <location>
        <begin position="459"/>
        <end position="473"/>
    </location>
</feature>
<feature type="active site" description="Proton acceptor" evidence="7 9">
    <location>
        <position position="280"/>
    </location>
</feature>
<feature type="binding site" evidence="7">
    <location>
        <begin position="163"/>
        <end position="171"/>
    </location>
    <ligand>
        <name>ATP</name>
        <dbReference type="ChEBI" id="CHEBI:30616"/>
    </ligand>
</feature>
<feature type="binding site" evidence="7">
    <location>
        <position position="186"/>
    </location>
    <ligand>
        <name>ATP</name>
        <dbReference type="ChEBI" id="CHEBI:30616"/>
    </ligand>
</feature>
<feature type="modified residue" description="Phosphothreonine" evidence="5">
    <location>
        <position position="314"/>
    </location>
</feature>
<feature type="modified residue" description="Phosphoserine" evidence="4">
    <location>
        <position position="479"/>
    </location>
</feature>
<feature type="glycosylation site" description="O-linked (GlcNAc) serine" evidence="2">
    <location>
        <position position="133"/>
    </location>
</feature>
<feature type="glycosylation site" description="O-linked (GlcNAc) serine" evidence="2">
    <location>
        <position position="136"/>
    </location>
</feature>
<feature type="glycosylation site" description="O-linked (GlcNAc) threonine" evidence="2">
    <location>
        <position position="311"/>
    </location>
</feature>
<feature type="glycosylation site" description="O-linked (GlcNAc) threonine" evidence="2">
    <location>
        <position position="318"/>
    </location>
</feature>
<feature type="glycosylation site" description="O-linked (GlcNAc) serine; alternate" evidence="3">
    <location>
        <position position="479"/>
    </location>
</feature>
<dbReference type="EC" id="2.7.11.1"/>
<dbReference type="EMBL" id="BC046261">
    <property type="protein sequence ID" value="AAH46261.1"/>
    <property type="molecule type" value="mRNA"/>
</dbReference>
<dbReference type="RefSeq" id="NP_001080091.1">
    <property type="nucleotide sequence ID" value="NM_001086622.1"/>
</dbReference>
<dbReference type="RefSeq" id="XP_018084111.1">
    <property type="nucleotide sequence ID" value="XM_018228622.1"/>
</dbReference>
<dbReference type="SMR" id="Q7ZX15"/>
<dbReference type="GlyCosmos" id="Q7ZX15">
    <property type="glycosylation" value="4 sites, No reported glycans"/>
</dbReference>
<dbReference type="GeneID" id="379783"/>
<dbReference type="KEGG" id="xla:379783"/>
<dbReference type="AGR" id="Xenbase:XB-GENE-484172"/>
<dbReference type="CTD" id="379783"/>
<dbReference type="Xenbase" id="XB-GENE-484172">
    <property type="gene designation" value="akt2.L"/>
</dbReference>
<dbReference type="OMA" id="DRCECLG"/>
<dbReference type="OrthoDB" id="63267at2759"/>
<dbReference type="Proteomes" id="UP000186698">
    <property type="component" value="Chromosome 8L"/>
</dbReference>
<dbReference type="Bgee" id="379783">
    <property type="expression patterns" value="Expressed in gastrula and 19 other cell types or tissues"/>
</dbReference>
<dbReference type="GO" id="GO:0005938">
    <property type="term" value="C:cell cortex"/>
    <property type="evidence" value="ECO:0000250"/>
    <property type="project" value="UniProtKB"/>
</dbReference>
<dbReference type="GO" id="GO:0005737">
    <property type="term" value="C:cytoplasm"/>
    <property type="evidence" value="ECO:0000318"/>
    <property type="project" value="GO_Central"/>
</dbReference>
<dbReference type="GO" id="GO:0005634">
    <property type="term" value="C:nucleus"/>
    <property type="evidence" value="ECO:0000318"/>
    <property type="project" value="GO_Central"/>
</dbReference>
<dbReference type="GO" id="GO:0005886">
    <property type="term" value="C:plasma membrane"/>
    <property type="evidence" value="ECO:0000250"/>
    <property type="project" value="UniProtKB"/>
</dbReference>
<dbReference type="GO" id="GO:0032587">
    <property type="term" value="C:ruffle membrane"/>
    <property type="evidence" value="ECO:0000250"/>
    <property type="project" value="UniProtKB"/>
</dbReference>
<dbReference type="GO" id="GO:0005524">
    <property type="term" value="F:ATP binding"/>
    <property type="evidence" value="ECO:0007669"/>
    <property type="project" value="UniProtKB-KW"/>
</dbReference>
<dbReference type="GO" id="GO:0106310">
    <property type="term" value="F:protein serine kinase activity"/>
    <property type="evidence" value="ECO:0007669"/>
    <property type="project" value="RHEA"/>
</dbReference>
<dbReference type="GO" id="GO:0004674">
    <property type="term" value="F:protein serine/threonine kinase activity"/>
    <property type="evidence" value="ECO:0000318"/>
    <property type="project" value="GO_Central"/>
</dbReference>
<dbReference type="GO" id="GO:0090314">
    <property type="term" value="P:positive regulation of protein targeting to membrane"/>
    <property type="evidence" value="ECO:0000250"/>
    <property type="project" value="UniProtKB"/>
</dbReference>
<dbReference type="GO" id="GO:0043434">
    <property type="term" value="P:response to peptide hormone"/>
    <property type="evidence" value="ECO:0000318"/>
    <property type="project" value="GO_Central"/>
</dbReference>
<dbReference type="CDD" id="cd01241">
    <property type="entry name" value="PH_PKB"/>
    <property type="match status" value="1"/>
</dbReference>
<dbReference type="CDD" id="cd05595">
    <property type="entry name" value="STKc_PKB_beta"/>
    <property type="match status" value="1"/>
</dbReference>
<dbReference type="FunFam" id="1.10.510.10:FF:000033">
    <property type="entry name" value="Non-specific serine/threonine protein kinase"/>
    <property type="match status" value="1"/>
</dbReference>
<dbReference type="FunFam" id="2.30.29.30:FF:000027">
    <property type="entry name" value="Non-specific serine/threonine protein kinase"/>
    <property type="match status" value="1"/>
</dbReference>
<dbReference type="FunFam" id="3.30.200.20:FF:000838">
    <property type="entry name" value="Non-specific serine/threonine protein kinase"/>
    <property type="match status" value="1"/>
</dbReference>
<dbReference type="Gene3D" id="3.30.200.20">
    <property type="entry name" value="Phosphorylase Kinase, domain 1"/>
    <property type="match status" value="1"/>
</dbReference>
<dbReference type="Gene3D" id="2.30.29.30">
    <property type="entry name" value="Pleckstrin-homology domain (PH domain)/Phosphotyrosine-binding domain (PTB)"/>
    <property type="match status" value="1"/>
</dbReference>
<dbReference type="Gene3D" id="1.10.510.10">
    <property type="entry name" value="Transferase(Phosphotransferase) domain 1"/>
    <property type="match status" value="1"/>
</dbReference>
<dbReference type="InterPro" id="IPR000961">
    <property type="entry name" value="AGC-kinase_C"/>
</dbReference>
<dbReference type="InterPro" id="IPR034677">
    <property type="entry name" value="Akt2"/>
</dbReference>
<dbReference type="InterPro" id="IPR011009">
    <property type="entry name" value="Kinase-like_dom_sf"/>
</dbReference>
<dbReference type="InterPro" id="IPR011993">
    <property type="entry name" value="PH-like_dom_sf"/>
</dbReference>
<dbReference type="InterPro" id="IPR001849">
    <property type="entry name" value="PH_domain"/>
</dbReference>
<dbReference type="InterPro" id="IPR039026">
    <property type="entry name" value="PH_PKB"/>
</dbReference>
<dbReference type="InterPro" id="IPR017892">
    <property type="entry name" value="Pkinase_C"/>
</dbReference>
<dbReference type="InterPro" id="IPR000719">
    <property type="entry name" value="Prot_kinase_dom"/>
</dbReference>
<dbReference type="InterPro" id="IPR017441">
    <property type="entry name" value="Protein_kinase_ATP_BS"/>
</dbReference>
<dbReference type="InterPro" id="IPR008271">
    <property type="entry name" value="Ser/Thr_kinase_AS"/>
</dbReference>
<dbReference type="PANTHER" id="PTHR24351">
    <property type="entry name" value="RIBOSOMAL PROTEIN S6 KINASE"/>
    <property type="match status" value="1"/>
</dbReference>
<dbReference type="Pfam" id="PF00169">
    <property type="entry name" value="PH"/>
    <property type="match status" value="1"/>
</dbReference>
<dbReference type="Pfam" id="PF00069">
    <property type="entry name" value="Pkinase"/>
    <property type="match status" value="1"/>
</dbReference>
<dbReference type="Pfam" id="PF00433">
    <property type="entry name" value="Pkinase_C"/>
    <property type="match status" value="1"/>
</dbReference>
<dbReference type="SMART" id="SM00233">
    <property type="entry name" value="PH"/>
    <property type="match status" value="1"/>
</dbReference>
<dbReference type="SMART" id="SM00133">
    <property type="entry name" value="S_TK_X"/>
    <property type="match status" value="1"/>
</dbReference>
<dbReference type="SMART" id="SM00220">
    <property type="entry name" value="S_TKc"/>
    <property type="match status" value="1"/>
</dbReference>
<dbReference type="SUPFAM" id="SSF50729">
    <property type="entry name" value="PH domain-like"/>
    <property type="match status" value="1"/>
</dbReference>
<dbReference type="SUPFAM" id="SSF56112">
    <property type="entry name" value="Protein kinase-like (PK-like)"/>
    <property type="match status" value="1"/>
</dbReference>
<dbReference type="PROSITE" id="PS51285">
    <property type="entry name" value="AGC_KINASE_CTER"/>
    <property type="match status" value="1"/>
</dbReference>
<dbReference type="PROSITE" id="PS50003">
    <property type="entry name" value="PH_DOMAIN"/>
    <property type="match status" value="1"/>
</dbReference>
<dbReference type="PROSITE" id="PS00107">
    <property type="entry name" value="PROTEIN_KINASE_ATP"/>
    <property type="match status" value="1"/>
</dbReference>
<dbReference type="PROSITE" id="PS50011">
    <property type="entry name" value="PROTEIN_KINASE_DOM"/>
    <property type="match status" value="1"/>
</dbReference>
<dbReference type="PROSITE" id="PS00108">
    <property type="entry name" value="PROTEIN_KINASE_ST"/>
    <property type="match status" value="1"/>
</dbReference>
<proteinExistence type="evidence at transcript level"/>
<reference evidence="12" key="1">
    <citation type="submission" date="2003-01" db="EMBL/GenBank/DDBJ databases">
        <authorList>
            <consortium name="NIH - Xenopus Gene Collection (XGC) project"/>
        </authorList>
    </citation>
    <scope>NUCLEOTIDE SEQUENCE [LARGE SCALE MRNA]</scope>
    <source>
        <tissue evidence="12">Embryo</tissue>
    </source>
</reference>
<organism>
    <name type="scientific">Xenopus laevis</name>
    <name type="common">African clawed frog</name>
    <dbReference type="NCBI Taxonomy" id="8355"/>
    <lineage>
        <taxon>Eukaryota</taxon>
        <taxon>Metazoa</taxon>
        <taxon>Chordata</taxon>
        <taxon>Craniata</taxon>
        <taxon>Vertebrata</taxon>
        <taxon>Euteleostomi</taxon>
        <taxon>Amphibia</taxon>
        <taxon>Batrachia</taxon>
        <taxon>Anura</taxon>
        <taxon>Pipoidea</taxon>
        <taxon>Pipidae</taxon>
        <taxon>Xenopodinae</taxon>
        <taxon>Xenopus</taxon>
        <taxon>Xenopus</taxon>
    </lineage>
</organism>
<sequence>MNEVMVIKEGWLQKRGEYIKTWRPRYFLLKSDGSFIGYKEKPESTEHNVVLPPLNNFSVAECQLMKTERPRPNTFVIRCLQWTTVIERTFHVDTPEEREEWIIAIQTVANGLKNQVPEDEEEEAMEVKYGSPSDVSSAEQMDVAMSKGHPKVTMNDFDYLKLLGKGTFGKVILVREKATGRYYAMKILRKEVIIAKDEVAHTLTESRVLQNTKHPFLTALKYAFQTSDRLCFVMEYANGGELFFHLSRERVFTEDRARFYGAEIVSALEYLHSRNVVYRDIKLENLMLDKDGHVKITDFGLCKEGITDGATMRTFCGTPEYLAPEVLEDNDYGRAVDWWGLGVVMYEMMCGRLPFYNQDHERLFELILMEEIRFPRTLSPEAKSLLAGLLKKDPKQRLGGGPNDAQEVMSHRFFVSINWQDVTERKLTPPFKPQVTSEIDTRYFDDEFTAQSITLTPPDRYDNLDALESDQRPHFPQFSYSASIRE</sequence>